<reference key="1">
    <citation type="submission" date="2003-05" db="EMBL/GenBank/DDBJ databases">
        <title>Chloroplast psbL and psbJ genes of Chinese Hordeum species.</title>
        <authorList>
            <person name="Wei Y.-M."/>
            <person name="Yan Z.-H."/>
            <person name="Wu W."/>
            <person name="Zhang Z.-Q."/>
            <person name="Zheng Y.-L."/>
        </authorList>
    </citation>
    <scope>NUCLEOTIDE SEQUENCE [GENOMIC DNA]</scope>
</reference>
<dbReference type="EMBL" id="AY309023">
    <property type="protein sequence ID" value="AAP70318.1"/>
    <property type="molecule type" value="Genomic_DNA"/>
</dbReference>
<dbReference type="RefSeq" id="YP_009156889.1">
    <property type="nucleotide sequence ID" value="NC_027476.1"/>
</dbReference>
<dbReference type="SMR" id="Q6W6R2"/>
<dbReference type="GeneID" id="25017694"/>
<dbReference type="GO" id="GO:0009535">
    <property type="term" value="C:chloroplast thylakoid membrane"/>
    <property type="evidence" value="ECO:0007669"/>
    <property type="project" value="UniProtKB-SubCell"/>
</dbReference>
<dbReference type="GO" id="GO:0009539">
    <property type="term" value="C:photosystem II reaction center"/>
    <property type="evidence" value="ECO:0007669"/>
    <property type="project" value="InterPro"/>
</dbReference>
<dbReference type="GO" id="GO:0015979">
    <property type="term" value="P:photosynthesis"/>
    <property type="evidence" value="ECO:0007669"/>
    <property type="project" value="UniProtKB-UniRule"/>
</dbReference>
<dbReference type="Gene3D" id="6.10.250.2070">
    <property type="match status" value="1"/>
</dbReference>
<dbReference type="HAMAP" id="MF_01305">
    <property type="entry name" value="PSII_PsbJ"/>
    <property type="match status" value="1"/>
</dbReference>
<dbReference type="InterPro" id="IPR002682">
    <property type="entry name" value="PSII_PsbJ"/>
</dbReference>
<dbReference type="InterPro" id="IPR037267">
    <property type="entry name" value="PSII_PsbJ_sf"/>
</dbReference>
<dbReference type="NCBIfam" id="NF002722">
    <property type="entry name" value="PRK02565.1"/>
    <property type="match status" value="1"/>
</dbReference>
<dbReference type="PANTHER" id="PTHR34812">
    <property type="entry name" value="PHOTOSYSTEM II REACTION CENTER PROTEIN J"/>
    <property type="match status" value="1"/>
</dbReference>
<dbReference type="PANTHER" id="PTHR34812:SF3">
    <property type="entry name" value="PHOTOSYSTEM II REACTION CENTER PROTEIN J"/>
    <property type="match status" value="1"/>
</dbReference>
<dbReference type="Pfam" id="PF01788">
    <property type="entry name" value="PsbJ"/>
    <property type="match status" value="1"/>
</dbReference>
<dbReference type="SUPFAM" id="SSF161021">
    <property type="entry name" value="Photosystem II reaction center protein J, PsbJ"/>
    <property type="match status" value="1"/>
</dbReference>
<keyword id="KW-0150">Chloroplast</keyword>
<keyword id="KW-0472">Membrane</keyword>
<keyword id="KW-0602">Photosynthesis</keyword>
<keyword id="KW-0604">Photosystem II</keyword>
<keyword id="KW-0934">Plastid</keyword>
<keyword id="KW-0674">Reaction center</keyword>
<keyword id="KW-0793">Thylakoid</keyword>
<keyword id="KW-0812">Transmembrane</keyword>
<keyword id="KW-1133">Transmembrane helix</keyword>
<protein>
    <recommendedName>
        <fullName evidence="1">Photosystem II reaction center protein J</fullName>
        <shortName evidence="1">PSII-J</shortName>
    </recommendedName>
</protein>
<feature type="chain" id="PRO_0000216593" description="Photosystem II reaction center protein J">
    <location>
        <begin position="1"/>
        <end position="40"/>
    </location>
</feature>
<feature type="transmembrane region" description="Helical" evidence="1">
    <location>
        <begin position="8"/>
        <end position="28"/>
    </location>
</feature>
<organism>
    <name type="scientific">Hordeum jubatum</name>
    <name type="common">Foxtail barley</name>
    <name type="synonym">Critesion jubatum</name>
    <dbReference type="NCBI Taxonomy" id="4517"/>
    <lineage>
        <taxon>Eukaryota</taxon>
        <taxon>Viridiplantae</taxon>
        <taxon>Streptophyta</taxon>
        <taxon>Embryophyta</taxon>
        <taxon>Tracheophyta</taxon>
        <taxon>Spermatophyta</taxon>
        <taxon>Magnoliopsida</taxon>
        <taxon>Liliopsida</taxon>
        <taxon>Poales</taxon>
        <taxon>Poaceae</taxon>
        <taxon>BOP clade</taxon>
        <taxon>Pooideae</taxon>
        <taxon>Triticodae</taxon>
        <taxon>Triticeae</taxon>
        <taxon>Hordeinae</taxon>
        <taxon>Hordeum</taxon>
    </lineage>
</organism>
<evidence type="ECO:0000255" key="1">
    <source>
        <dbReference type="HAMAP-Rule" id="MF_01305"/>
    </source>
</evidence>
<geneLocation type="chloroplast"/>
<proteinExistence type="inferred from homology"/>
<accession>Q6W6R2</accession>
<gene>
    <name evidence="1" type="primary">psbJ</name>
</gene>
<comment type="function">
    <text evidence="1">One of the components of the core complex of photosystem II (PSII). PSII is a light-driven water:plastoquinone oxidoreductase that uses light energy to abstract electrons from H(2)O, generating O(2) and a proton gradient subsequently used for ATP formation. It consists of a core antenna complex that captures photons, and an electron transfer chain that converts photonic excitation into a charge separation.</text>
</comment>
<comment type="subunit">
    <text evidence="1">PSII is composed of 1 copy each of membrane proteins PsbA, PsbB, PsbC, PsbD, PsbE, PsbF, PsbH, PsbI, PsbJ, PsbK, PsbL, PsbM, PsbT, PsbX, PsbY, PsbZ, Psb30/Ycf12, at least 3 peripheral proteins of the oxygen-evolving complex and a large number of cofactors. It forms dimeric complexes.</text>
</comment>
<comment type="subcellular location">
    <subcellularLocation>
        <location evidence="1">Plastid</location>
        <location evidence="1">Chloroplast thylakoid membrane</location>
        <topology evidence="1">Single-pass membrane protein</topology>
    </subcellularLocation>
</comment>
<comment type="similarity">
    <text evidence="1">Belongs to the PsbJ family.</text>
</comment>
<name>PSBJ_HORJU</name>
<sequence length="40" mass="4087">MADTTGRIPLWLIGTVAGIPVIGLVGVFFYGSYSGLGSSL</sequence>